<organism>
    <name type="scientific">Shigella boydii serotype 4 (strain Sb227)</name>
    <dbReference type="NCBI Taxonomy" id="300268"/>
    <lineage>
        <taxon>Bacteria</taxon>
        <taxon>Pseudomonadati</taxon>
        <taxon>Pseudomonadota</taxon>
        <taxon>Gammaproteobacteria</taxon>
        <taxon>Enterobacterales</taxon>
        <taxon>Enterobacteriaceae</taxon>
        <taxon>Shigella</taxon>
    </lineage>
</organism>
<comment type="function">
    <text evidence="1">Murein-degrading enzyme. May play a role in recycling of muropeptides during cell elongation and/or cell division.</text>
</comment>
<comment type="catalytic activity">
    <reaction evidence="1">
        <text>Exolytic cleavage of the (1-&gt;4)-beta-glycosidic linkage between N-acetylmuramic acid (MurNAc) and N-acetylglucosamine (GlcNAc) residues in peptidoglycan, from either the reducing or the non-reducing ends of the peptidoglycan chains, with concomitant formation of a 1,6-anhydrobond in the MurNAc residue.</text>
        <dbReference type="EC" id="4.2.2.n1"/>
    </reaction>
</comment>
<comment type="subcellular location">
    <subcellularLocation>
        <location evidence="1">Cell outer membrane</location>
        <topology evidence="1">Lipid-anchor</topology>
    </subcellularLocation>
</comment>
<comment type="similarity">
    <text evidence="1">Belongs to the transglycosylase Slt family.</text>
</comment>
<comment type="sequence caution" evidence="2">
    <conflict type="erroneous initiation">
        <sequence resource="EMBL-CDS" id="ABB67533"/>
    </conflict>
</comment>
<feature type="signal peptide" evidence="1">
    <location>
        <begin position="1"/>
        <end position="16"/>
    </location>
</feature>
<feature type="chain" id="PRO_0000335587" description="Membrane-bound lytic murein transglycosylase C">
    <location>
        <begin position="17"/>
        <end position="359"/>
    </location>
</feature>
<feature type="lipid moiety-binding region" description="N-palmitoyl cysteine" evidence="1">
    <location>
        <position position="17"/>
    </location>
</feature>
<feature type="lipid moiety-binding region" description="S-diacylglycerol cysteine" evidence="1">
    <location>
        <position position="17"/>
    </location>
</feature>
<accession>Q31WM5</accession>
<dbReference type="EC" id="4.2.2.n1" evidence="1"/>
<dbReference type="EMBL" id="CP000036">
    <property type="protein sequence ID" value="ABB67533.1"/>
    <property type="status" value="ALT_INIT"/>
    <property type="molecule type" value="Genomic_DNA"/>
</dbReference>
<dbReference type="RefSeq" id="WP_001298916.1">
    <property type="nucleotide sequence ID" value="NC_007613.1"/>
</dbReference>
<dbReference type="SMR" id="Q31WM5"/>
<dbReference type="CAZy" id="GH23">
    <property type="family name" value="Glycoside Hydrolase Family 23"/>
</dbReference>
<dbReference type="GeneID" id="93779028"/>
<dbReference type="KEGG" id="sbo:SBO_3027"/>
<dbReference type="HOGENOM" id="CLU_044583_0_0_6"/>
<dbReference type="Proteomes" id="UP000007067">
    <property type="component" value="Chromosome"/>
</dbReference>
<dbReference type="GO" id="GO:0009279">
    <property type="term" value="C:cell outer membrane"/>
    <property type="evidence" value="ECO:0007669"/>
    <property type="project" value="UniProtKB-SubCell"/>
</dbReference>
<dbReference type="GO" id="GO:0016798">
    <property type="term" value="F:hydrolase activity, acting on glycosyl bonds"/>
    <property type="evidence" value="ECO:0007669"/>
    <property type="project" value="InterPro"/>
</dbReference>
<dbReference type="GO" id="GO:0008933">
    <property type="term" value="F:peptidoglycan lytic transglycosylase activity"/>
    <property type="evidence" value="ECO:0007669"/>
    <property type="project" value="UniProtKB-UniRule"/>
</dbReference>
<dbReference type="GO" id="GO:0016998">
    <property type="term" value="P:cell wall macromolecule catabolic process"/>
    <property type="evidence" value="ECO:0007669"/>
    <property type="project" value="UniProtKB-UniRule"/>
</dbReference>
<dbReference type="GO" id="GO:0071555">
    <property type="term" value="P:cell wall organization"/>
    <property type="evidence" value="ECO:0007669"/>
    <property type="project" value="UniProtKB-KW"/>
</dbReference>
<dbReference type="GO" id="GO:0000270">
    <property type="term" value="P:peptidoglycan metabolic process"/>
    <property type="evidence" value="ECO:0007669"/>
    <property type="project" value="InterPro"/>
</dbReference>
<dbReference type="CDD" id="cd16893">
    <property type="entry name" value="LT_MltC_MltE"/>
    <property type="match status" value="1"/>
</dbReference>
<dbReference type="FunFam" id="1.10.530.10:FF:000002">
    <property type="entry name" value="Membrane-bound lytic murein transglycosylase C"/>
    <property type="match status" value="1"/>
</dbReference>
<dbReference type="Gene3D" id="1.10.530.10">
    <property type="match status" value="1"/>
</dbReference>
<dbReference type="HAMAP" id="MF_01616">
    <property type="entry name" value="MltC"/>
    <property type="match status" value="1"/>
</dbReference>
<dbReference type="InterPro" id="IPR023346">
    <property type="entry name" value="Lysozyme-like_dom_sf"/>
</dbReference>
<dbReference type="InterPro" id="IPR023664">
    <property type="entry name" value="Murein_transglycosylaseC"/>
</dbReference>
<dbReference type="InterPro" id="IPR024570">
    <property type="entry name" value="Murein_transglycosylaseC_N"/>
</dbReference>
<dbReference type="InterPro" id="IPR000189">
    <property type="entry name" value="Transglyc_AS"/>
</dbReference>
<dbReference type="InterPro" id="IPR008258">
    <property type="entry name" value="Transglycosylase_SLT_dom_1"/>
</dbReference>
<dbReference type="NCBIfam" id="NF008670">
    <property type="entry name" value="PRK11671.1"/>
    <property type="match status" value="1"/>
</dbReference>
<dbReference type="PANTHER" id="PTHR37423:SF2">
    <property type="entry name" value="MEMBRANE-BOUND LYTIC MUREIN TRANSGLYCOSYLASE C"/>
    <property type="match status" value="1"/>
</dbReference>
<dbReference type="PANTHER" id="PTHR37423">
    <property type="entry name" value="SOLUBLE LYTIC MUREIN TRANSGLYCOSYLASE-RELATED"/>
    <property type="match status" value="1"/>
</dbReference>
<dbReference type="Pfam" id="PF11873">
    <property type="entry name" value="Mltc_N"/>
    <property type="match status" value="1"/>
</dbReference>
<dbReference type="Pfam" id="PF01464">
    <property type="entry name" value="SLT"/>
    <property type="match status" value="1"/>
</dbReference>
<dbReference type="SUPFAM" id="SSF53955">
    <property type="entry name" value="Lysozyme-like"/>
    <property type="match status" value="1"/>
</dbReference>
<dbReference type="PROSITE" id="PS51257">
    <property type="entry name" value="PROKAR_LIPOPROTEIN"/>
    <property type="match status" value="1"/>
</dbReference>
<dbReference type="PROSITE" id="PS00922">
    <property type="entry name" value="TRANSGLYCOSYLASE"/>
    <property type="match status" value="1"/>
</dbReference>
<reference key="1">
    <citation type="journal article" date="2005" name="Nucleic Acids Res.">
        <title>Genome dynamics and diversity of Shigella species, the etiologic agents of bacillary dysentery.</title>
        <authorList>
            <person name="Yang F."/>
            <person name="Yang J."/>
            <person name="Zhang X."/>
            <person name="Chen L."/>
            <person name="Jiang Y."/>
            <person name="Yan Y."/>
            <person name="Tang X."/>
            <person name="Wang J."/>
            <person name="Xiong Z."/>
            <person name="Dong J."/>
            <person name="Xue Y."/>
            <person name="Zhu Y."/>
            <person name="Xu X."/>
            <person name="Sun L."/>
            <person name="Chen S."/>
            <person name="Nie H."/>
            <person name="Peng J."/>
            <person name="Xu J."/>
            <person name="Wang Y."/>
            <person name="Yuan Z."/>
            <person name="Wen Y."/>
            <person name="Yao Z."/>
            <person name="Shen Y."/>
            <person name="Qiang B."/>
            <person name="Hou Y."/>
            <person name="Yu J."/>
            <person name="Jin Q."/>
        </authorList>
    </citation>
    <scope>NUCLEOTIDE SEQUENCE [LARGE SCALE GENOMIC DNA]</scope>
    <source>
        <strain>Sb227</strain>
    </source>
</reference>
<name>MLTC_SHIBS</name>
<sequence>MKKYLALALIAPLLISCSTTKKGDTYNEAWVKDTNGFDILMGQFAHNIENIWGFKEVVIAGPKDYVKYTDQYQTRSHINFDDGTITIETIAGTEPAAHLRRAIIKTLLMGDDPSSVDLYSDVDDITISKEPFLYGQVVDNTGQPIRWEGRASNFADYLLKNRLQSRSNGLRIIYSVTINMVPNHLDKRAHKYLGMVRQASRKYGVDESLILAIMQTESSFNPYAVSRSDALGLMQVVQHTAGKDVFRSQGKSGTPSRSFLFDPASNIDTGTAYLAMLNNVYLGGIDNPTSRRYAVITAYNGGAGSVLRVFSNDKIQAANIINTMTPGDVYQTLTTRHPSAESRRYLYKVNTAQKSYRRR</sequence>
<protein>
    <recommendedName>
        <fullName evidence="1">Membrane-bound lytic murein transglycosylase C</fullName>
        <ecNumber evidence="1">4.2.2.n1</ecNumber>
    </recommendedName>
    <alternativeName>
        <fullName evidence="1">Murein lyase C</fullName>
    </alternativeName>
</protein>
<evidence type="ECO:0000255" key="1">
    <source>
        <dbReference type="HAMAP-Rule" id="MF_01616"/>
    </source>
</evidence>
<evidence type="ECO:0000305" key="2"/>
<proteinExistence type="inferred from homology"/>
<gene>
    <name evidence="1" type="primary">mltC</name>
    <name type="ordered locus">SBO_3027</name>
</gene>
<keyword id="KW-0998">Cell outer membrane</keyword>
<keyword id="KW-0961">Cell wall biogenesis/degradation</keyword>
<keyword id="KW-0449">Lipoprotein</keyword>
<keyword id="KW-0456">Lyase</keyword>
<keyword id="KW-0472">Membrane</keyword>
<keyword id="KW-0564">Palmitate</keyword>
<keyword id="KW-0732">Signal</keyword>